<proteinExistence type="inferred from homology"/>
<name>RL23_BDEBA</name>
<dbReference type="EMBL" id="BX842654">
    <property type="protein sequence ID" value="CAE80746.1"/>
    <property type="molecule type" value="Genomic_DNA"/>
</dbReference>
<dbReference type="RefSeq" id="WP_011165350.1">
    <property type="nucleotide sequence ID" value="NC_005363.1"/>
</dbReference>
<dbReference type="SMR" id="Q6MJ16"/>
<dbReference type="STRING" id="264462.Bd2974"/>
<dbReference type="GeneID" id="93013837"/>
<dbReference type="KEGG" id="bba:Bd2974"/>
<dbReference type="eggNOG" id="COG0089">
    <property type="taxonomic scope" value="Bacteria"/>
</dbReference>
<dbReference type="HOGENOM" id="CLU_037562_3_1_7"/>
<dbReference type="Proteomes" id="UP000008080">
    <property type="component" value="Chromosome"/>
</dbReference>
<dbReference type="GO" id="GO:1990904">
    <property type="term" value="C:ribonucleoprotein complex"/>
    <property type="evidence" value="ECO:0007669"/>
    <property type="project" value="UniProtKB-KW"/>
</dbReference>
<dbReference type="GO" id="GO:0005840">
    <property type="term" value="C:ribosome"/>
    <property type="evidence" value="ECO:0007669"/>
    <property type="project" value="UniProtKB-KW"/>
</dbReference>
<dbReference type="GO" id="GO:0019843">
    <property type="term" value="F:rRNA binding"/>
    <property type="evidence" value="ECO:0007669"/>
    <property type="project" value="UniProtKB-UniRule"/>
</dbReference>
<dbReference type="GO" id="GO:0003735">
    <property type="term" value="F:structural constituent of ribosome"/>
    <property type="evidence" value="ECO:0007669"/>
    <property type="project" value="InterPro"/>
</dbReference>
<dbReference type="GO" id="GO:0006412">
    <property type="term" value="P:translation"/>
    <property type="evidence" value="ECO:0007669"/>
    <property type="project" value="UniProtKB-UniRule"/>
</dbReference>
<dbReference type="Gene3D" id="3.30.70.330">
    <property type="match status" value="1"/>
</dbReference>
<dbReference type="HAMAP" id="MF_01369_B">
    <property type="entry name" value="Ribosomal_uL23_B"/>
    <property type="match status" value="1"/>
</dbReference>
<dbReference type="InterPro" id="IPR012677">
    <property type="entry name" value="Nucleotide-bd_a/b_plait_sf"/>
</dbReference>
<dbReference type="InterPro" id="IPR013025">
    <property type="entry name" value="Ribosomal_uL23-like"/>
</dbReference>
<dbReference type="InterPro" id="IPR012678">
    <property type="entry name" value="Ribosomal_uL23/eL15/eS24_sf"/>
</dbReference>
<dbReference type="InterPro" id="IPR001014">
    <property type="entry name" value="Ribosomal_uL23_CS"/>
</dbReference>
<dbReference type="NCBIfam" id="NF004363">
    <property type="entry name" value="PRK05738.2-4"/>
    <property type="match status" value="1"/>
</dbReference>
<dbReference type="PANTHER" id="PTHR11620">
    <property type="entry name" value="60S RIBOSOMAL PROTEIN L23A"/>
    <property type="match status" value="1"/>
</dbReference>
<dbReference type="Pfam" id="PF00276">
    <property type="entry name" value="Ribosomal_L23"/>
    <property type="match status" value="1"/>
</dbReference>
<dbReference type="SUPFAM" id="SSF54189">
    <property type="entry name" value="Ribosomal proteins S24e, L23 and L15e"/>
    <property type="match status" value="1"/>
</dbReference>
<dbReference type="PROSITE" id="PS00050">
    <property type="entry name" value="RIBOSOMAL_L23"/>
    <property type="match status" value="1"/>
</dbReference>
<keyword id="KW-1185">Reference proteome</keyword>
<keyword id="KW-0687">Ribonucleoprotein</keyword>
<keyword id="KW-0689">Ribosomal protein</keyword>
<keyword id="KW-0694">RNA-binding</keyword>
<keyword id="KW-0699">rRNA-binding</keyword>
<feature type="chain" id="PRO_0000272707" description="Large ribosomal subunit protein uL23">
    <location>
        <begin position="1"/>
        <end position="92"/>
    </location>
</feature>
<reference key="1">
    <citation type="journal article" date="2004" name="Science">
        <title>A predator unmasked: life cycle of Bdellovibrio bacteriovorus from a genomic perspective.</title>
        <authorList>
            <person name="Rendulic S."/>
            <person name="Jagtap P."/>
            <person name="Rosinus A."/>
            <person name="Eppinger M."/>
            <person name="Baar C."/>
            <person name="Lanz C."/>
            <person name="Keller H."/>
            <person name="Lambert C."/>
            <person name="Evans K.J."/>
            <person name="Goesmann A."/>
            <person name="Meyer F."/>
            <person name="Sockett R.E."/>
            <person name="Schuster S.C."/>
        </authorList>
    </citation>
    <scope>NUCLEOTIDE SEQUENCE [LARGE SCALE GENOMIC DNA]</scope>
    <source>
        <strain>ATCC 15356 / DSM 50701 / NCIMB 9529 / HD100</strain>
    </source>
</reference>
<accession>Q6MJ16</accession>
<organism>
    <name type="scientific">Bdellovibrio bacteriovorus (strain ATCC 15356 / DSM 50701 / NCIMB 9529 / HD100)</name>
    <dbReference type="NCBI Taxonomy" id="264462"/>
    <lineage>
        <taxon>Bacteria</taxon>
        <taxon>Pseudomonadati</taxon>
        <taxon>Bdellovibrionota</taxon>
        <taxon>Bdellovibrionia</taxon>
        <taxon>Bdellovibrionales</taxon>
        <taxon>Pseudobdellovibrionaceae</taxon>
        <taxon>Bdellovibrio</taxon>
    </lineage>
</organism>
<protein>
    <recommendedName>
        <fullName evidence="1">Large ribosomal subunit protein uL23</fullName>
    </recommendedName>
    <alternativeName>
        <fullName evidence="2">50S ribosomal protein L23</fullName>
    </alternativeName>
</protein>
<gene>
    <name evidence="1" type="primary">rplW</name>
    <name type="ordered locus">Bd2974</name>
</gene>
<evidence type="ECO:0000255" key="1">
    <source>
        <dbReference type="HAMAP-Rule" id="MF_01369"/>
    </source>
</evidence>
<evidence type="ECO:0000305" key="2"/>
<comment type="function">
    <text evidence="1">One of the early assembly proteins it binds 23S rRNA. One of the proteins that surrounds the polypeptide exit tunnel on the outside of the ribosome. Forms the main docking site for trigger factor binding to the ribosome.</text>
</comment>
<comment type="subunit">
    <text evidence="1">Part of the 50S ribosomal subunit. Contacts protein L29, and trigger factor when it is bound to the ribosome.</text>
</comment>
<comment type="similarity">
    <text evidence="1">Belongs to the universal ribosomal protein uL23 family.</text>
</comment>
<sequence>MKQVIKAPLITEKNTYHNAAGVYVFEVDLKSSKTEVKAAVEKNFKVKVDSVRTSVCRGHSKQTKFGLTKVAYWKKAYVKLAEGEKIALFEGV</sequence>